<comment type="function">
    <text evidence="1">Catalyzes the attachment of isoleucine to tRNA(Ile). As IleRS can inadvertently accommodate and process structurally similar amino acids such as valine, to avoid such errors it has two additional distinct tRNA(Ile)-dependent editing activities. One activity is designated as 'pretransfer' editing and involves the hydrolysis of activated Val-AMP. The other activity is designated 'posttransfer' editing and involves deacylation of mischarged Val-tRNA(Ile).</text>
</comment>
<comment type="catalytic activity">
    <reaction evidence="1">
        <text>tRNA(Ile) + L-isoleucine + ATP = L-isoleucyl-tRNA(Ile) + AMP + diphosphate</text>
        <dbReference type="Rhea" id="RHEA:11060"/>
        <dbReference type="Rhea" id="RHEA-COMP:9666"/>
        <dbReference type="Rhea" id="RHEA-COMP:9695"/>
        <dbReference type="ChEBI" id="CHEBI:30616"/>
        <dbReference type="ChEBI" id="CHEBI:33019"/>
        <dbReference type="ChEBI" id="CHEBI:58045"/>
        <dbReference type="ChEBI" id="CHEBI:78442"/>
        <dbReference type="ChEBI" id="CHEBI:78528"/>
        <dbReference type="ChEBI" id="CHEBI:456215"/>
        <dbReference type="EC" id="6.1.1.5"/>
    </reaction>
</comment>
<comment type="cofactor">
    <cofactor evidence="1">
        <name>Zn(2+)</name>
        <dbReference type="ChEBI" id="CHEBI:29105"/>
    </cofactor>
    <text evidence="1">Binds 1 zinc ion per subunit.</text>
</comment>
<comment type="subunit">
    <text evidence="1">Monomer.</text>
</comment>
<comment type="subcellular location">
    <subcellularLocation>
        <location evidence="1">Cytoplasm</location>
    </subcellularLocation>
</comment>
<comment type="domain">
    <text evidence="1">IleRS has two distinct active sites: one for aminoacylation and one for editing. The misactivated valine is translocated from the active site to the editing site, which sterically excludes the correctly activated isoleucine. The single editing site contains two valyl binding pockets, one specific for each substrate (Val-AMP or Val-tRNA(Ile)).</text>
</comment>
<comment type="similarity">
    <text evidence="1">Belongs to the class-I aminoacyl-tRNA synthetase family. IleS type 1 subfamily.</text>
</comment>
<gene>
    <name evidence="1" type="primary">ileS</name>
    <name type="ordered locus">MYPE8820</name>
</gene>
<dbReference type="EC" id="6.1.1.5" evidence="1"/>
<dbReference type="EMBL" id="BA000026">
    <property type="protein sequence ID" value="BAC44673.1"/>
    <property type="molecule type" value="Genomic_DNA"/>
</dbReference>
<dbReference type="RefSeq" id="WP_011077702.1">
    <property type="nucleotide sequence ID" value="NC_004432.1"/>
</dbReference>
<dbReference type="SMR" id="Q8EUN9"/>
<dbReference type="FunCoup" id="Q8EUN9">
    <property type="interactions" value="248"/>
</dbReference>
<dbReference type="STRING" id="272633.gene:10732004"/>
<dbReference type="KEGG" id="mpe:MYPE8820"/>
<dbReference type="eggNOG" id="COG0060">
    <property type="taxonomic scope" value="Bacteria"/>
</dbReference>
<dbReference type="HOGENOM" id="CLU_001493_7_0_14"/>
<dbReference type="InParanoid" id="Q8EUN9"/>
<dbReference type="Proteomes" id="UP000002522">
    <property type="component" value="Chromosome"/>
</dbReference>
<dbReference type="GO" id="GO:0005829">
    <property type="term" value="C:cytosol"/>
    <property type="evidence" value="ECO:0007669"/>
    <property type="project" value="TreeGrafter"/>
</dbReference>
<dbReference type="GO" id="GO:0002161">
    <property type="term" value="F:aminoacyl-tRNA deacylase activity"/>
    <property type="evidence" value="ECO:0007669"/>
    <property type="project" value="InterPro"/>
</dbReference>
<dbReference type="GO" id="GO:0005524">
    <property type="term" value="F:ATP binding"/>
    <property type="evidence" value="ECO:0007669"/>
    <property type="project" value="UniProtKB-UniRule"/>
</dbReference>
<dbReference type="GO" id="GO:0004822">
    <property type="term" value="F:isoleucine-tRNA ligase activity"/>
    <property type="evidence" value="ECO:0007669"/>
    <property type="project" value="UniProtKB-UniRule"/>
</dbReference>
<dbReference type="GO" id="GO:0000049">
    <property type="term" value="F:tRNA binding"/>
    <property type="evidence" value="ECO:0007669"/>
    <property type="project" value="InterPro"/>
</dbReference>
<dbReference type="GO" id="GO:0008270">
    <property type="term" value="F:zinc ion binding"/>
    <property type="evidence" value="ECO:0007669"/>
    <property type="project" value="UniProtKB-UniRule"/>
</dbReference>
<dbReference type="GO" id="GO:0006428">
    <property type="term" value="P:isoleucyl-tRNA aminoacylation"/>
    <property type="evidence" value="ECO:0007669"/>
    <property type="project" value="UniProtKB-UniRule"/>
</dbReference>
<dbReference type="CDD" id="cd07960">
    <property type="entry name" value="Anticodon_Ia_Ile_BEm"/>
    <property type="match status" value="1"/>
</dbReference>
<dbReference type="CDD" id="cd00818">
    <property type="entry name" value="IleRS_core"/>
    <property type="match status" value="1"/>
</dbReference>
<dbReference type="Gene3D" id="1.10.730.20">
    <property type="match status" value="1"/>
</dbReference>
<dbReference type="Gene3D" id="3.40.50.620">
    <property type="entry name" value="HUPs"/>
    <property type="match status" value="2"/>
</dbReference>
<dbReference type="Gene3D" id="3.90.740.10">
    <property type="entry name" value="Valyl/Leucyl/Isoleucyl-tRNA synthetase, editing domain"/>
    <property type="match status" value="1"/>
</dbReference>
<dbReference type="HAMAP" id="MF_02002">
    <property type="entry name" value="Ile_tRNA_synth_type1"/>
    <property type="match status" value="1"/>
</dbReference>
<dbReference type="InterPro" id="IPR002300">
    <property type="entry name" value="aa-tRNA-synth_Ia"/>
</dbReference>
<dbReference type="InterPro" id="IPR033708">
    <property type="entry name" value="Anticodon_Ile_BEm"/>
</dbReference>
<dbReference type="InterPro" id="IPR002301">
    <property type="entry name" value="Ile-tRNA-ligase"/>
</dbReference>
<dbReference type="InterPro" id="IPR023585">
    <property type="entry name" value="Ile-tRNA-ligase_type1"/>
</dbReference>
<dbReference type="InterPro" id="IPR050081">
    <property type="entry name" value="Ile-tRNA_ligase"/>
</dbReference>
<dbReference type="InterPro" id="IPR013155">
    <property type="entry name" value="M/V/L/I-tRNA-synth_anticd-bd"/>
</dbReference>
<dbReference type="InterPro" id="IPR014729">
    <property type="entry name" value="Rossmann-like_a/b/a_fold"/>
</dbReference>
<dbReference type="InterPro" id="IPR009080">
    <property type="entry name" value="tRNAsynth_Ia_anticodon-bd"/>
</dbReference>
<dbReference type="InterPro" id="IPR009008">
    <property type="entry name" value="Val/Leu/Ile-tRNA-synth_edit"/>
</dbReference>
<dbReference type="NCBIfam" id="TIGR00392">
    <property type="entry name" value="ileS"/>
    <property type="match status" value="1"/>
</dbReference>
<dbReference type="PANTHER" id="PTHR42765:SF1">
    <property type="entry name" value="ISOLEUCINE--TRNA LIGASE, MITOCHONDRIAL"/>
    <property type="match status" value="1"/>
</dbReference>
<dbReference type="PANTHER" id="PTHR42765">
    <property type="entry name" value="SOLEUCYL-TRNA SYNTHETASE"/>
    <property type="match status" value="1"/>
</dbReference>
<dbReference type="Pfam" id="PF08264">
    <property type="entry name" value="Anticodon_1"/>
    <property type="match status" value="1"/>
</dbReference>
<dbReference type="Pfam" id="PF00133">
    <property type="entry name" value="tRNA-synt_1"/>
    <property type="match status" value="1"/>
</dbReference>
<dbReference type="PRINTS" id="PR00984">
    <property type="entry name" value="TRNASYNTHILE"/>
</dbReference>
<dbReference type="SUPFAM" id="SSF47323">
    <property type="entry name" value="Anticodon-binding domain of a subclass of class I aminoacyl-tRNA synthetases"/>
    <property type="match status" value="1"/>
</dbReference>
<dbReference type="SUPFAM" id="SSF52374">
    <property type="entry name" value="Nucleotidylyl transferase"/>
    <property type="match status" value="1"/>
</dbReference>
<dbReference type="SUPFAM" id="SSF50677">
    <property type="entry name" value="ValRS/IleRS/LeuRS editing domain"/>
    <property type="match status" value="1"/>
</dbReference>
<accession>Q8EUN9</accession>
<keyword id="KW-0030">Aminoacyl-tRNA synthetase</keyword>
<keyword id="KW-0067">ATP-binding</keyword>
<keyword id="KW-0963">Cytoplasm</keyword>
<keyword id="KW-0436">Ligase</keyword>
<keyword id="KW-0479">Metal-binding</keyword>
<keyword id="KW-0547">Nucleotide-binding</keyword>
<keyword id="KW-0648">Protein biosynthesis</keyword>
<keyword id="KW-1185">Reference proteome</keyword>
<keyword id="KW-0862">Zinc</keyword>
<name>SYI_MALP2</name>
<evidence type="ECO:0000255" key="1">
    <source>
        <dbReference type="HAMAP-Rule" id="MF_02002"/>
    </source>
</evidence>
<proteinExistence type="inferred from homology"/>
<protein>
    <recommendedName>
        <fullName evidence="1">Isoleucine--tRNA ligase</fullName>
        <ecNumber evidence="1">6.1.1.5</ecNumber>
    </recommendedName>
    <alternativeName>
        <fullName evidence="1">Isoleucyl-tRNA synthetase</fullName>
        <shortName evidence="1">IleRS</shortName>
    </alternativeName>
</protein>
<sequence length="900" mass="104162">MSDYKKTLSMPNTNFEMKANLSVKETKIQENWVLEKIEKKILAKNKSNTPFIIADGPPYANGDLHTGHALNKILKDIILRFKASVGFYTKYIPGWDTHGLPIEQEMAKRGLNKNANQTITEKRKNCKNFAIENVYKQRDQFRRLGILSEMDEIYVTCDLDYVIRQIKIFNKMLSKGLIYQDLKPVYWSWSSQTALADAEIIYQDVESDSIYVSLEILDKNEFVSKGDKVIIWTTTPWTLPSNLAIAANPKVTYCRVQVENSVYVISKNLVEKLAETLEWTNYEILSEFSGKKLENLPYKSPISDKKCKIIVDGYVSDSDGTGLVHNAPGFGHEDYLACKKYNIKPYCPIDNLGKFTGEVNDKELAGLFYKDANPIIIERLAKKKLLLKASKFTHSAAHDWRTKKPVIYRATKQWFVNIDKISKEIVAALNKVKSIDNTIIKKIKEMVLNRQEWCISRQRIWGVPICIIYDKDYNPILDPKLLNNIVDILNDEGINAWYNEDAKYFLTDSYNTSKKYIKETDIMDVWFDSGTSYSVLQADKLGYPADLYFEGKDQFRGWFNSSLITSVAAFKKSPYKELLTHGFVLDENGNKMSKSLGNIIDPLQVCKEYGADVLRLWVASVDFSKDVSISKDIIAQNAELYRRIRNTLFRFILGNLNGFNLKKLRGAKYSEADLYVLSCLSNDIKTIKACYDKYDFKQIVKIVSKNVADLSSWYFDYIKDPLYCEKEDNEQRIAIQATLYQLLDSYLRILAPIIPHTCEEAYEFFDKKDKQKSVHLEGFTNFKIDSKYKVDFKKWEEFFDLKDKVYSEIEKTRNEKVINSKGQAHITIHSKSLPFDEQTLERYLGVAKVEFKVKEKDGTTIKVKNSKYARCERCWNYYPTNLIANELCERCKKVIGNKKI</sequence>
<reference key="1">
    <citation type="journal article" date="2002" name="Nucleic Acids Res.">
        <title>The complete genomic sequence of Mycoplasma penetrans, an intracellular bacterial pathogen in humans.</title>
        <authorList>
            <person name="Sasaki Y."/>
            <person name="Ishikawa J."/>
            <person name="Yamashita A."/>
            <person name="Oshima K."/>
            <person name="Kenri T."/>
            <person name="Furuya K."/>
            <person name="Yoshino C."/>
            <person name="Horino A."/>
            <person name="Shiba T."/>
            <person name="Sasaki T."/>
            <person name="Hattori M."/>
        </authorList>
    </citation>
    <scope>NUCLEOTIDE SEQUENCE [LARGE SCALE GENOMIC DNA]</scope>
    <source>
        <strain>HF-2</strain>
    </source>
</reference>
<organism>
    <name type="scientific">Malacoplasma penetrans (strain HF-2)</name>
    <name type="common">Mycoplasma penetrans</name>
    <dbReference type="NCBI Taxonomy" id="272633"/>
    <lineage>
        <taxon>Bacteria</taxon>
        <taxon>Bacillati</taxon>
        <taxon>Mycoplasmatota</taxon>
        <taxon>Mycoplasmoidales</taxon>
        <taxon>Mycoplasmoidaceae</taxon>
        <taxon>Malacoplasma</taxon>
    </lineage>
</organism>
<feature type="chain" id="PRO_0000098423" description="Isoleucine--tRNA ligase">
    <location>
        <begin position="1"/>
        <end position="900"/>
    </location>
</feature>
<feature type="short sequence motif" description="'HIGH' region">
    <location>
        <begin position="58"/>
        <end position="68"/>
    </location>
</feature>
<feature type="short sequence motif" description="'KMSKS' region">
    <location>
        <begin position="591"/>
        <end position="595"/>
    </location>
</feature>
<feature type="binding site" evidence="1">
    <location>
        <position position="550"/>
    </location>
    <ligand>
        <name>L-isoleucyl-5'-AMP</name>
        <dbReference type="ChEBI" id="CHEBI:178002"/>
    </ligand>
</feature>
<feature type="binding site" evidence="1">
    <location>
        <position position="594"/>
    </location>
    <ligand>
        <name>ATP</name>
        <dbReference type="ChEBI" id="CHEBI:30616"/>
    </ligand>
</feature>
<feature type="binding site" evidence="1">
    <location>
        <position position="871"/>
    </location>
    <ligand>
        <name>Zn(2+)</name>
        <dbReference type="ChEBI" id="CHEBI:29105"/>
    </ligand>
</feature>
<feature type="binding site" evidence="1">
    <location>
        <position position="874"/>
    </location>
    <ligand>
        <name>Zn(2+)</name>
        <dbReference type="ChEBI" id="CHEBI:29105"/>
    </ligand>
</feature>
<feature type="binding site" evidence="1">
    <location>
        <position position="888"/>
    </location>
    <ligand>
        <name>Zn(2+)</name>
        <dbReference type="ChEBI" id="CHEBI:29105"/>
    </ligand>
</feature>
<feature type="binding site" evidence="1">
    <location>
        <position position="891"/>
    </location>
    <ligand>
        <name>Zn(2+)</name>
        <dbReference type="ChEBI" id="CHEBI:29105"/>
    </ligand>
</feature>